<name>PRIS_SULAC</name>
<reference key="1">
    <citation type="journal article" date="2005" name="J. Bacteriol.">
        <title>The genome of Sulfolobus acidocaldarius, a model organism of the Crenarchaeota.</title>
        <authorList>
            <person name="Chen L."/>
            <person name="Bruegger K."/>
            <person name="Skovgaard M."/>
            <person name="Redder P."/>
            <person name="She Q."/>
            <person name="Torarinsson E."/>
            <person name="Greve B."/>
            <person name="Awayez M."/>
            <person name="Zibat A."/>
            <person name="Klenk H.-P."/>
            <person name="Garrett R.A."/>
        </authorList>
    </citation>
    <scope>NUCLEOTIDE SEQUENCE [LARGE SCALE GENOMIC DNA]</scope>
    <source>
        <strain>ATCC 33909 / DSM 639 / JCM 8929 / NBRC 15157 / NCIMB 11770</strain>
    </source>
</reference>
<evidence type="ECO:0000255" key="1">
    <source>
        <dbReference type="HAMAP-Rule" id="MF_00700"/>
    </source>
</evidence>
<dbReference type="EC" id="2.7.7.-" evidence="1"/>
<dbReference type="EMBL" id="CP000077">
    <property type="protein sequence ID" value="AAY80621.1"/>
    <property type="molecule type" value="Genomic_DNA"/>
</dbReference>
<dbReference type="RefSeq" id="WP_011278123.1">
    <property type="nucleotide sequence ID" value="NC_007181.1"/>
</dbReference>
<dbReference type="SMR" id="Q4J9B0"/>
<dbReference type="STRING" id="330779.Saci_1279"/>
<dbReference type="GeneID" id="14551784"/>
<dbReference type="GeneID" id="78441625"/>
<dbReference type="KEGG" id="sai:Saci_1279"/>
<dbReference type="PATRIC" id="fig|330779.12.peg.1237"/>
<dbReference type="eggNOG" id="arCOG04110">
    <property type="taxonomic scope" value="Archaea"/>
</dbReference>
<dbReference type="HOGENOM" id="CLU_056123_0_0_2"/>
<dbReference type="Proteomes" id="UP000001018">
    <property type="component" value="Chromosome"/>
</dbReference>
<dbReference type="GO" id="GO:0000428">
    <property type="term" value="C:DNA-directed RNA polymerase complex"/>
    <property type="evidence" value="ECO:0007669"/>
    <property type="project" value="UniProtKB-KW"/>
</dbReference>
<dbReference type="GO" id="GO:1990077">
    <property type="term" value="C:primosome complex"/>
    <property type="evidence" value="ECO:0007669"/>
    <property type="project" value="UniProtKB-KW"/>
</dbReference>
<dbReference type="GO" id="GO:0003899">
    <property type="term" value="F:DNA-directed RNA polymerase activity"/>
    <property type="evidence" value="ECO:0007669"/>
    <property type="project" value="InterPro"/>
</dbReference>
<dbReference type="GO" id="GO:0046872">
    <property type="term" value="F:metal ion binding"/>
    <property type="evidence" value="ECO:0007669"/>
    <property type="project" value="UniProtKB-KW"/>
</dbReference>
<dbReference type="GO" id="GO:0006269">
    <property type="term" value="P:DNA replication, synthesis of primer"/>
    <property type="evidence" value="ECO:0007669"/>
    <property type="project" value="UniProtKB-UniRule"/>
</dbReference>
<dbReference type="CDD" id="cd04860">
    <property type="entry name" value="AE_Prim_S"/>
    <property type="match status" value="1"/>
</dbReference>
<dbReference type="Gene3D" id="3.90.920.10">
    <property type="entry name" value="DNA primase, PRIM domain"/>
    <property type="match status" value="1"/>
</dbReference>
<dbReference type="HAMAP" id="MF_00700">
    <property type="entry name" value="DNA_primase_sml_arc"/>
    <property type="match status" value="1"/>
</dbReference>
<dbReference type="InterPro" id="IPR014052">
    <property type="entry name" value="DNA_primase_ssu_euk/arc"/>
</dbReference>
<dbReference type="InterPro" id="IPR023639">
    <property type="entry name" value="DNA_primase_ssu_PriS"/>
</dbReference>
<dbReference type="NCBIfam" id="NF001641">
    <property type="entry name" value="PRK00419.1-3"/>
    <property type="match status" value="1"/>
</dbReference>
<dbReference type="PANTHER" id="PTHR10536">
    <property type="entry name" value="DNA PRIMASE SMALL SUBUNIT"/>
    <property type="match status" value="1"/>
</dbReference>
<dbReference type="Pfam" id="PF20873">
    <property type="entry name" value="PriS_C"/>
    <property type="match status" value="1"/>
</dbReference>
<dbReference type="SUPFAM" id="SSF56747">
    <property type="entry name" value="Prim-pol domain"/>
    <property type="match status" value="1"/>
</dbReference>
<protein>
    <recommendedName>
        <fullName evidence="1">DNA primase small subunit PriS</fullName>
        <ecNumber evidence="1">2.7.7.-</ecNumber>
    </recommendedName>
</protein>
<sequence length="322" mass="36708">MQISISLQGQSKIIYQIFRSYYENAVLDLPQDIELREFAYQPFNSDTYVRHLTFSSVDELRSFILSNVPLHLYFSAARYQIPSAKEMEQKGWLGSDLLFDLDADDICEINVRRFCSGMEILSETCDGEVREISEITVDCINRVFENALVLKDILIQDFGLKPRIFFSGNRGFHIRVDCYNEWANLDSEDRREIAEYIMSPSPPYESNSESGPGWLGRFARGINGVKIDEQVTVDPKRLVRIPGSLNGKAGLKVIEIVNDKFEYDEYLSPFEGIVAFQSNLSGKFNVLGHEIQLRRGEITKLSAKTGVYLALKGYGVIKAHVR</sequence>
<feature type="chain" id="PRO_0000046753" description="DNA primase small subunit PriS">
    <location>
        <begin position="1"/>
        <end position="322"/>
    </location>
</feature>
<feature type="active site" evidence="1">
    <location>
        <position position="100"/>
    </location>
</feature>
<feature type="active site" evidence="1">
    <location>
        <position position="102"/>
    </location>
</feature>
<feature type="active site" evidence="1">
    <location>
        <position position="228"/>
    </location>
</feature>
<comment type="function">
    <text evidence="1">Catalytic subunit of DNA primase, an RNA polymerase that catalyzes the synthesis of short RNA molecules used as primers for DNA polymerase during DNA replication. The small subunit contains the primase catalytic core and has DNA synthesis activity on its own. Binding to the large subunit stabilizes and modulates the activity, increasing the rate of DNA synthesis while decreasing the length of the DNA fragments, and conferring RNA synthesis capability. The DNA polymerase activity may enable DNA primase to also catalyze primer extension after primer synthesis. May also play a role in DNA repair.</text>
</comment>
<comment type="cofactor">
    <cofactor evidence="1">
        <name>Mg(2+)</name>
        <dbReference type="ChEBI" id="CHEBI:18420"/>
    </cofactor>
    <cofactor evidence="1">
        <name>Mn(2+)</name>
        <dbReference type="ChEBI" id="CHEBI:29035"/>
    </cofactor>
</comment>
<comment type="subunit">
    <text evidence="1">Heterodimer of a small subunit (PriS) and a large subunit (PriL).</text>
</comment>
<comment type="similarity">
    <text evidence="1">Belongs to the eukaryotic-type primase small subunit family.</text>
</comment>
<accession>Q4J9B0</accession>
<gene>
    <name evidence="1" type="primary">priS</name>
    <name type="synonym">priA</name>
    <name type="ordered locus">Saci_1279</name>
</gene>
<proteinExistence type="inferred from homology"/>
<organism>
    <name type="scientific">Sulfolobus acidocaldarius (strain ATCC 33909 / DSM 639 / JCM 8929 / NBRC 15157 / NCIMB 11770)</name>
    <dbReference type="NCBI Taxonomy" id="330779"/>
    <lineage>
        <taxon>Archaea</taxon>
        <taxon>Thermoproteota</taxon>
        <taxon>Thermoprotei</taxon>
        <taxon>Sulfolobales</taxon>
        <taxon>Sulfolobaceae</taxon>
        <taxon>Sulfolobus</taxon>
    </lineage>
</organism>
<keyword id="KW-0235">DNA replication</keyword>
<keyword id="KW-0240">DNA-directed RNA polymerase</keyword>
<keyword id="KW-0460">Magnesium</keyword>
<keyword id="KW-0464">Manganese</keyword>
<keyword id="KW-0479">Metal-binding</keyword>
<keyword id="KW-0548">Nucleotidyltransferase</keyword>
<keyword id="KW-0639">Primosome</keyword>
<keyword id="KW-1185">Reference proteome</keyword>
<keyword id="KW-0804">Transcription</keyword>
<keyword id="KW-0808">Transferase</keyword>